<evidence type="ECO:0000250" key="1">
    <source>
        <dbReference type="UniProtKB" id="A8YPR6"/>
    </source>
</evidence>
<evidence type="ECO:0000256" key="2">
    <source>
        <dbReference type="SAM" id="MobiDB-lite"/>
    </source>
</evidence>
<evidence type="ECO:0000269" key="3">
    <source>
    </source>
</evidence>
<evidence type="ECO:0000305" key="4"/>
<dbReference type="GO" id="GO:0005576">
    <property type="term" value="C:extracellular region"/>
    <property type="evidence" value="ECO:0007669"/>
    <property type="project" value="UniProtKB-SubCell"/>
</dbReference>
<dbReference type="GO" id="GO:0030414">
    <property type="term" value="F:peptidase inhibitor activity"/>
    <property type="evidence" value="ECO:0007669"/>
    <property type="project" value="UniProtKB-KW"/>
</dbReference>
<organism>
    <name type="scientific">Atheris chlorechis</name>
    <name type="common">Western bush viper</name>
    <name type="synonym">Vipera chlorechis</name>
    <dbReference type="NCBI Taxonomy" id="110216"/>
    <lineage>
        <taxon>Eukaryota</taxon>
        <taxon>Metazoa</taxon>
        <taxon>Chordata</taxon>
        <taxon>Craniata</taxon>
        <taxon>Vertebrata</taxon>
        <taxon>Euteleostomi</taxon>
        <taxon>Lepidosauria</taxon>
        <taxon>Squamata</taxon>
        <taxon>Bifurcata</taxon>
        <taxon>Unidentata</taxon>
        <taxon>Episquamata</taxon>
        <taxon>Toxicofera</taxon>
        <taxon>Serpentes</taxon>
        <taxon>Colubroidea</taxon>
        <taxon>Viperidae</taxon>
        <taxon>Viperinae</taxon>
        <taxon>Atheris</taxon>
    </lineage>
</organism>
<comment type="function">
    <text evidence="1">May serve as a metalloproteinase inhibitor during glandular storage. Their inhibition may be instantly disengaged, by dilution or physiochemical change, when venom is injected into tissue of the victim.</text>
</comment>
<comment type="subcellular location">
    <subcellularLocation>
        <location>Secreted</location>
    </subcellularLocation>
</comment>
<comment type="tissue specificity">
    <text>Expressed by the venom gland.</text>
</comment>
<comment type="mass spectrometry" mass="2337.0" method="Electrospray" evidence="3"/>
<comment type="similarity">
    <text evidence="4">Belongs to the pHpG family.</text>
</comment>
<accession>P0C7K5</accession>
<feature type="peptide" id="PRO_0000335993" description="Poly-His-poly-Gly peptide 1">
    <location>
        <begin position="1"/>
        <end position="24"/>
    </location>
</feature>
<feature type="region of interest" description="Disordered" evidence="2">
    <location>
        <begin position="1"/>
        <end position="24"/>
    </location>
</feature>
<feature type="compositionally biased region" description="Basic residues" evidence="2">
    <location>
        <begin position="1"/>
        <end position="13"/>
    </location>
</feature>
<feature type="compositionally biased region" description="Gly residues" evidence="2">
    <location>
        <begin position="14"/>
        <end position="24"/>
    </location>
</feature>
<protein>
    <recommendedName>
        <fullName>Poly-His-poly-Gly peptide 1</fullName>
        <shortName>pHpG-1</shortName>
    </recommendedName>
</protein>
<reference key="1">
    <citation type="journal article" date="2007" name="Rapid Commun. Mass Spectrom.">
        <title>The venom of the snake genus Atheris contains a new class of peptides with clusters of histidine and glycine residues.</title>
        <authorList>
            <person name="Favreau P."/>
            <person name="Cheneval O."/>
            <person name="Menin L."/>
            <person name="Michalet S."/>
            <person name="Gaertner H."/>
            <person name="Principaud F."/>
            <person name="Thai R."/>
            <person name="Menez A."/>
            <person name="Bulet P."/>
            <person name="Stoecklin R."/>
        </authorList>
    </citation>
    <scope>PROTEIN SEQUENCE</scope>
    <scope>MASS SPECTROMETRY</scope>
    <source>
        <tissue>Venom</tissue>
    </source>
</reference>
<sequence length="24" mass="2338">EDDHHHHHHHHHGVGGGGGGGGGG</sequence>
<proteinExistence type="evidence at protein level"/>
<keyword id="KW-0903">Direct protein sequencing</keyword>
<keyword id="KW-0481">Metalloenzyme inhibitor</keyword>
<keyword id="KW-0483">Metalloprotease inhibitor</keyword>
<keyword id="KW-0646">Protease inhibitor</keyword>
<keyword id="KW-0964">Secreted</keyword>
<name>SVMI1_ATHCH</name>